<protein>
    <recommendedName>
        <fullName>Genome polyprotein</fullName>
    </recommendedName>
    <alternativeName>
        <fullName>p254</fullName>
    </alternativeName>
    <component>
        <recommendedName>
            <fullName>NS1</fullName>
        </recommendedName>
        <alternativeName>
            <fullName>Protein p16</fullName>
        </alternativeName>
    </component>
    <component>
        <recommendedName>
            <fullName>NS2</fullName>
        </recommendedName>
        <alternativeName>
            <fullName>Protein p23</fullName>
        </alternativeName>
    </component>
    <component>
        <recommendedName>
            <fullName>NTPase</fullName>
            <ecNumber evidence="6">3.6.1.15</ecNumber>
        </recommendedName>
        <alternativeName>
            <fullName>2C-like protein</fullName>
        </alternativeName>
        <alternativeName>
            <fullName>NS3</fullName>
        </alternativeName>
        <alternativeName>
            <fullName>P2C</fullName>
        </alternativeName>
        <alternativeName>
            <fullName>p37</fullName>
        </alternativeName>
    </component>
    <component>
        <recommendedName>
            <fullName>Precursor p41</fullName>
        </recommendedName>
    </component>
    <component>
        <recommendedName>
            <fullName>NS4</fullName>
        </recommendedName>
        <alternativeName>
            <fullName>Protein p29</fullName>
        </alternativeName>
    </component>
    <component>
        <recommendedName>
            <fullName>Protein p23/2</fullName>
        </recommendedName>
    </component>
    <component>
        <recommendedName>
            <fullName>Protein p18</fullName>
        </recommendedName>
    </component>
    <component>
        <recommendedName>
            <fullName>Viral genome-linked protein</fullName>
        </recommendedName>
        <alternativeName>
            <fullName>NS5</fullName>
        </alternativeName>
        <alternativeName>
            <fullName>VPg</fullName>
        </alternativeName>
        <alternativeName>
            <fullName>p13</fullName>
        </alternativeName>
    </component>
    <component>
        <recommendedName>
            <fullName>3C-like protease</fullName>
            <shortName>3CLpro</shortName>
            <ecNumber>3.4.22.66</ecNumber>
        </recommendedName>
        <alternativeName>
            <fullName>Calicivirin</fullName>
        </alternativeName>
        <alternativeName>
            <fullName>NS6</fullName>
        </alternativeName>
        <alternativeName>
            <fullName>Thiol protease P3C</fullName>
        </alternativeName>
        <alternativeName>
            <fullName>p15</fullName>
        </alternativeName>
    </component>
    <component>
        <recommendedName>
            <fullName>RNA-directed RNA polymerase</fullName>
            <ecNumber>2.7.7.48</ecNumber>
        </recommendedName>
        <alternativeName>
            <fullName>3Dpol</fullName>
        </alternativeName>
        <alternativeName>
            <fullName>NS7</fullName>
        </alternativeName>
        <alternativeName>
            <fullName>p58</fullName>
        </alternativeName>
    </component>
    <component>
        <recommendedName>
            <fullName>Capsid protein VP60</fullName>
        </recommendedName>
    </component>
</protein>
<dbReference type="EC" id="3.6.1.15" evidence="6"/>
<dbReference type="EC" id="3.4.22.66"/>
<dbReference type="EC" id="2.7.7.48"/>
<dbReference type="EMBL" id="Z29514">
    <property type="protein sequence ID" value="CAA82635.1"/>
    <property type="molecule type" value="Genomic_RNA"/>
</dbReference>
<dbReference type="SMR" id="Q86117"/>
<dbReference type="MEROPS" id="C24.001"/>
<dbReference type="Proteomes" id="UP000121187">
    <property type="component" value="Genome"/>
</dbReference>
<dbReference type="GO" id="GO:0044165">
    <property type="term" value="C:host cell endoplasmic reticulum"/>
    <property type="evidence" value="ECO:0007669"/>
    <property type="project" value="UniProtKB-SubCell"/>
</dbReference>
<dbReference type="GO" id="GO:0019028">
    <property type="term" value="C:viral capsid"/>
    <property type="evidence" value="ECO:0007669"/>
    <property type="project" value="UniProtKB-KW"/>
</dbReference>
<dbReference type="GO" id="GO:0005524">
    <property type="term" value="F:ATP binding"/>
    <property type="evidence" value="ECO:0007669"/>
    <property type="project" value="UniProtKB-KW"/>
</dbReference>
<dbReference type="GO" id="GO:0004197">
    <property type="term" value="F:cysteine-type endopeptidase activity"/>
    <property type="evidence" value="ECO:0007669"/>
    <property type="project" value="InterPro"/>
</dbReference>
<dbReference type="GO" id="GO:0017111">
    <property type="term" value="F:ribonucleoside triphosphate phosphatase activity"/>
    <property type="evidence" value="ECO:0007669"/>
    <property type="project" value="UniProtKB-EC"/>
</dbReference>
<dbReference type="GO" id="GO:0003723">
    <property type="term" value="F:RNA binding"/>
    <property type="evidence" value="ECO:0007669"/>
    <property type="project" value="InterPro"/>
</dbReference>
<dbReference type="GO" id="GO:0003724">
    <property type="term" value="F:RNA helicase activity"/>
    <property type="evidence" value="ECO:0007669"/>
    <property type="project" value="InterPro"/>
</dbReference>
<dbReference type="GO" id="GO:0003968">
    <property type="term" value="F:RNA-directed RNA polymerase activity"/>
    <property type="evidence" value="ECO:0007669"/>
    <property type="project" value="UniProtKB-KW"/>
</dbReference>
<dbReference type="GO" id="GO:0006351">
    <property type="term" value="P:DNA-templated transcription"/>
    <property type="evidence" value="ECO:0007669"/>
    <property type="project" value="InterPro"/>
</dbReference>
<dbReference type="GO" id="GO:0006508">
    <property type="term" value="P:proteolysis"/>
    <property type="evidence" value="ECO:0007669"/>
    <property type="project" value="UniProtKB-KW"/>
</dbReference>
<dbReference type="GO" id="GO:0039694">
    <property type="term" value="P:viral RNA genome replication"/>
    <property type="evidence" value="ECO:0007669"/>
    <property type="project" value="InterPro"/>
</dbReference>
<dbReference type="CDD" id="cd00009">
    <property type="entry name" value="AAA"/>
    <property type="match status" value="1"/>
</dbReference>
<dbReference type="CDD" id="cd23192">
    <property type="entry name" value="Caliciviridae_RdRp"/>
    <property type="match status" value="1"/>
</dbReference>
<dbReference type="CDD" id="cd00205">
    <property type="entry name" value="rhv_like"/>
    <property type="match status" value="1"/>
</dbReference>
<dbReference type="Gene3D" id="1.10.260.110">
    <property type="match status" value="1"/>
</dbReference>
<dbReference type="Gene3D" id="1.20.960.20">
    <property type="match status" value="1"/>
</dbReference>
<dbReference type="Gene3D" id="2.60.120.20">
    <property type="match status" value="1"/>
</dbReference>
<dbReference type="Gene3D" id="3.30.70.270">
    <property type="match status" value="1"/>
</dbReference>
<dbReference type="Gene3D" id="4.10.8.20">
    <property type="entry name" value="DNA/RNA polymerases"/>
    <property type="match status" value="1"/>
</dbReference>
<dbReference type="Gene3D" id="3.40.50.300">
    <property type="entry name" value="P-loop containing nucleotide triphosphate hydrolases"/>
    <property type="match status" value="1"/>
</dbReference>
<dbReference type="InterPro" id="IPR004005">
    <property type="entry name" value="Calicivirus_coat"/>
</dbReference>
<dbReference type="InterPro" id="IPR043502">
    <property type="entry name" value="DNA/RNA_pol_sf"/>
</dbReference>
<dbReference type="InterPro" id="IPR004004">
    <property type="entry name" value="Helic/Pol/Pept_Calicivir-typ"/>
</dbReference>
<dbReference type="InterPro" id="IPR000605">
    <property type="entry name" value="Helicase_SF3_ssDNA/RNA_vir"/>
</dbReference>
<dbReference type="InterPro" id="IPR014759">
    <property type="entry name" value="Helicase_SF3_ssRNA_vir"/>
</dbReference>
<dbReference type="InterPro" id="IPR027417">
    <property type="entry name" value="P-loop_NTPase"/>
</dbReference>
<dbReference type="InterPro" id="IPR000317">
    <property type="entry name" value="Peptidase_C24"/>
</dbReference>
<dbReference type="InterPro" id="IPR009003">
    <property type="entry name" value="Peptidase_S1_PA"/>
</dbReference>
<dbReference type="InterPro" id="IPR043128">
    <property type="entry name" value="Rev_trsase/Diguanyl_cyclase"/>
</dbReference>
<dbReference type="InterPro" id="IPR033703">
    <property type="entry name" value="Rhv-like"/>
</dbReference>
<dbReference type="InterPro" id="IPR001205">
    <property type="entry name" value="RNA-dir_pol_C"/>
</dbReference>
<dbReference type="InterPro" id="IPR007094">
    <property type="entry name" value="RNA-dir_pol_PSvirus"/>
</dbReference>
<dbReference type="InterPro" id="IPR029053">
    <property type="entry name" value="Viral_coat"/>
</dbReference>
<dbReference type="InterPro" id="IPR049434">
    <property type="entry name" value="VPg"/>
</dbReference>
<dbReference type="Pfam" id="PF00915">
    <property type="entry name" value="Calici_coat"/>
    <property type="match status" value="1"/>
</dbReference>
<dbReference type="Pfam" id="PF03510">
    <property type="entry name" value="Peptidase_C24"/>
    <property type="match status" value="1"/>
</dbReference>
<dbReference type="Pfam" id="PF00680">
    <property type="entry name" value="RdRP_1"/>
    <property type="match status" value="1"/>
</dbReference>
<dbReference type="Pfam" id="PF00910">
    <property type="entry name" value="RNA_helicase"/>
    <property type="match status" value="1"/>
</dbReference>
<dbReference type="Pfam" id="PF20915">
    <property type="entry name" value="VPg"/>
    <property type="match status" value="1"/>
</dbReference>
<dbReference type="PRINTS" id="PR00916">
    <property type="entry name" value="2CENDOPTASE"/>
</dbReference>
<dbReference type="PRINTS" id="PR00918">
    <property type="entry name" value="CALICVIRUSNS"/>
</dbReference>
<dbReference type="SUPFAM" id="SSF56672">
    <property type="entry name" value="DNA/RNA polymerases"/>
    <property type="match status" value="1"/>
</dbReference>
<dbReference type="SUPFAM" id="SSF52540">
    <property type="entry name" value="P-loop containing nucleoside triphosphate hydrolases"/>
    <property type="match status" value="1"/>
</dbReference>
<dbReference type="SUPFAM" id="SSF88633">
    <property type="entry name" value="Positive stranded ssRNA viruses"/>
    <property type="match status" value="1"/>
</dbReference>
<dbReference type="SUPFAM" id="SSF50494">
    <property type="entry name" value="Trypsin-like serine proteases"/>
    <property type="match status" value="1"/>
</dbReference>
<dbReference type="PROSITE" id="PS51894">
    <property type="entry name" value="CV_3CL_PRO"/>
    <property type="match status" value="1"/>
</dbReference>
<dbReference type="PROSITE" id="PS50507">
    <property type="entry name" value="RDRP_SSRNA_POS"/>
    <property type="match status" value="1"/>
</dbReference>
<dbReference type="PROSITE" id="PS51218">
    <property type="entry name" value="SF3_HELICASE_2"/>
    <property type="match status" value="1"/>
</dbReference>
<name>POLG_RHDVS</name>
<gene>
    <name type="ORF">ORF1</name>
</gene>
<sequence>MAAMSRLTGMTTAILPEKKPLNFFLDLRDKTPPCCIRATGKLAWPVFLGQYGKEGPLETCNKCGKWLNGFGCFGLEDLGDVCLCSIAQQKHKFGPVCLCNRAYIHDCGRWRRRSRFLKHYKALNKVIPCAYQFDESFSTPVFEGEVDDLFVELGAPTSMGFMDKKLLKKGKKLMDKFVDVDEPCLTSRDASLLDSIASDNTIRAKWEEEYGVEMVQAARDRKDFMKNLRLALDNRPANPVTWYTKLGNITEKGKQWAKKVVYGACKVTDPLKTLASILLVGLHNVIAVDTTVMLSTFKPVNLLAILMDWTNDLTGFVTTLVRLLELYGVVQATVNLIVEGVKSFWDKVVCATDRCFDLLKRLFDTFEDSVPTGPTAGCLIFMAFVFSTVVGYLPNNSVITTFMKGAGKLTTFAGVIGAIRTLWITINQHMVAKDLTSIQQKVMTVVKMANEAATLDQLEIVSCLCSDLENTLTNRCTLPSYNQHLGILNASQKVISDLHTMVLGKINMTKQRPQPVAVIFKGAPGIGKTYLVHRIARDLGCQHPSTINFGLDHFDSYTGEEVAIADEFNTCGDGESWVELFIQMVNTNPCPLNCDKAENKNKVFNSKYLLCTTNSNMILNATHPRAGAFYRRVMIVEARNKAVESWQATRHGSKPGRSCYSKDMSHLTFQVYPHNMPAPGFVFVGDKLVKSQVAPREYKYSELLDLIKSEHPDVASFEGANRFNFVYPDAQYDQALLMWKQYFVMYGCVARLAKNFVDDIPYNQVHISRASDPKIEGCVEYQCKFQHLWRMVPQFVLGCVNMTNQLGTPLTQQQLDRVTNGVEGVTVTTVNNILPFHSQTTLINPSFIKLIWAVRKHLKGLSGVTKVAQFIWRVMTNPVDAYGSLVRTLTGAATFSDDPVSTTIICSNCTIQIHSCGGLLVRYSRDPVPVASDNVDRGDQGVDVFTDPNLISGFSWRQIAHLFVEVISRLCANHLVNLATMAALGAVATKAFQGVKGKTKRGRGARVNLGNDEYDEWQAARREFVNAHDMTAEEYLAMKNKAAMGSDDQDSVMFRSWWTRRQLRPDEDQVTIVGRGGVRNEVIRTRVRQTPKGPKTLDDGGFYDNDYEGLPGFMRHNGSGWMIHIGNGLYISNTHTARSSCSEVVTCSPTTDLCLVKGEAIRSVAQIAEGTPVCDWKKSPISTYGIKKTLSDSTKIDVLAYDGCTQTTHGDCGLPLYDSSGKIVAIHTGKLLGFSKMCTLIDLTITKGVYETSNFFCGEPIDYRGITAHRLVGAEPRPPVSGTRYAKVPGVPEEYKTGYRPANLGRSDPDSDKSLMNIAVKNLQVYQQEPKLDKVDEFIERAAADVLGYLRFLTKGERQVNLNFKAAFNTLDLSTSCGPFVPGKKIDHVKDGVMDQVLAKHLYKCWSVANSGKALHHIYACGLKDELRPLDKVKEGKKRLLWGCDVGVAVCAAAVFHNICYKLKMVARFGPIAVGVDMTSRDVDVIINNLTSKASDFLCLDYSKWDSTMSPCVVRLAIDILADCCEQTELTKSVVLTLKSHPMTILDAMIVQTKRGLPSGMPFTSVINSICHWLLWSAAVYKSCAEIGLHCSNLYEDAPFYTYGDDGVYAMTPMMVSLLPAIIENLRDYGLLPTAADKTEFIDVCPLNKISFLKRTFELTDIGWISKLDKSSILRQLEWSKTTSRHMMIEETYDLAKEERGVQLEELQVAAAAHGQEFFNFVRKELERQQAYTQFSVYSYDAARKILADRKRVVSVVPDDEFVNVMEGKARTAPQGEAAGTATTASVPGTTTDGMDPGVVATTSVVTAENSSASIATAGIGGPPQQVDQQETWRTNFYYNDVFTWSVADAPGSILYTVQHSPQNNPFTAVLSQMYAGWAGGMQFRFIVAGSGVFGGRLVAAVIPPGIEIGPGLEVRQFPHVVIDARSLEPVTITMPDLRPNMYHPTGDPGLVPTLVLSVYNNLINPFGGSTSAIQVTVETRPSEDFEFVMIRAPSSKTVDSISPAGLLTTPVLTGVGNDNRWNGQIVGLQPVPGGFSTCNRHWNLNGSTYGWSSPRFADIDHRRGSASYPGNNATNVLQFWYANAGSAIDNPISQVAPDGFPDMSFVPFNGPGIPAAGWVGFGAIWNSNSGAPNVTTVQAYELGFATGAPGNLQPTTNTSGSQTVAKSIYAVVTGTAQNPAGLFVMASGVISTPSANAITYTPQPDRIVTTPGTPAAAPVGKNTPIMFASVVRRTGDVNATAGSANGTQYGRGSQPLPVTIGLSLNNYSSALMPGQFFVWQLTFASGFMEIGLSVDGYFYAGTGASTTLIDLIELIDVRPVGPRPSKSTLVFNLGGTANGFSYV</sequence>
<proteinExistence type="inferred from homology"/>
<evidence type="ECO:0000250" key="1"/>
<evidence type="ECO:0000250" key="2">
    <source>
        <dbReference type="UniProtKB" id="P27409"/>
    </source>
</evidence>
<evidence type="ECO:0000250" key="3">
    <source>
        <dbReference type="UniProtKB" id="P27410"/>
    </source>
</evidence>
<evidence type="ECO:0000250" key="4">
    <source>
        <dbReference type="UniProtKB" id="P27411"/>
    </source>
</evidence>
<evidence type="ECO:0000250" key="5">
    <source>
        <dbReference type="UniProtKB" id="P54634"/>
    </source>
</evidence>
<evidence type="ECO:0000250" key="6">
    <source>
        <dbReference type="UniProtKB" id="Q04544"/>
    </source>
</evidence>
<evidence type="ECO:0000250" key="7">
    <source>
        <dbReference type="UniProtKB" id="Q66914"/>
    </source>
</evidence>
<evidence type="ECO:0000250" key="8">
    <source>
        <dbReference type="UniProtKB" id="Q86119"/>
    </source>
</evidence>
<evidence type="ECO:0000255" key="9">
    <source>
        <dbReference type="PROSITE-ProRule" id="PRU00539"/>
    </source>
</evidence>
<evidence type="ECO:0000255" key="10">
    <source>
        <dbReference type="PROSITE-ProRule" id="PRU00551"/>
    </source>
</evidence>
<evidence type="ECO:0000255" key="11">
    <source>
        <dbReference type="PROSITE-ProRule" id="PRU01242"/>
    </source>
</evidence>
<evidence type="ECO:0000256" key="12">
    <source>
        <dbReference type="SAM" id="MobiDB-lite"/>
    </source>
</evidence>
<evidence type="ECO:0000305" key="13"/>
<organism>
    <name type="scientific">Rabbit hemorrhagic disease virus (strain SD)</name>
    <name type="common">Ra/LV/RHDV/SD/1989/FR</name>
    <name type="synonym">RHDV-SD</name>
    <dbReference type="NCBI Taxonomy" id="314535"/>
    <lineage>
        <taxon>Viruses</taxon>
        <taxon>Riboviria</taxon>
        <taxon>Orthornavirae</taxon>
        <taxon>Pisuviricota</taxon>
        <taxon>Pisoniviricetes</taxon>
        <taxon>Picornavirales</taxon>
        <taxon>Caliciviridae</taxon>
        <taxon>Lagovirus</taxon>
        <taxon>Rabbit hemorrhagic disease virus</taxon>
    </lineage>
</organism>
<organismHost>
    <name type="scientific">Oryctolagus cuniculus</name>
    <name type="common">Rabbit</name>
    <dbReference type="NCBI Taxonomy" id="9986"/>
</organismHost>
<comment type="function">
    <molecule>NS2</molecule>
    <text evidence="5 7">Together with NTPase and NS4, initiates the formation of the replication complex (By similarity). Induces the proliferation of the host smooth ER membranes forming long tubular structures (By similarity). These remodeled membranes probably form the viral factories that contain the replication complex (By similarity).</text>
</comment>
<comment type="function">
    <molecule>NTPase</molecule>
    <text evidence="5 6 7">Displays NTPase activity, but no helicase activity (By similarity). Induces the formation of convoluted membranes derived from the host ER (By similarity). These remodeled membranes probably form the viral factories that contain the replication complex (By similarity). Together with NS2 and NS4, initiates the formation of the replication complex (By similarity).</text>
</comment>
<comment type="function">
    <molecule>NS4</molecule>
    <text evidence="5 7">Probable key protein responsible for the formation of membrane alterations by the virus (By similarity). Induces the formation of convoluted membranes derived from the host ER (By similarity). These remodeled membranes probably form the viral factories that contain the replication complex (By similarity). Together with NS2 and NTPase, initiates the formation of the replication complex (By similarity).</text>
</comment>
<comment type="function">
    <molecule>Viral genome-linked protein</molecule>
    <text evidence="2">Viral genome-linked protein is covalently linked to the 5'-end of the positive-strand, negative-strand genomic RNAs and subgenomic RNA. Acts as a genome-linked replication primer. May recruit ribosome to viral RNA thereby promoting viral proteins translation. Interacts with host translation initiation complex to allow the translation of viral proteins.</text>
</comment>
<comment type="function">
    <molecule>3C-like protease</molecule>
    <text evidence="9">Processes the polyprotein. 3CLpro-RdRp is first released by autocleavage, then all other proteins are cleaved. May cleave polyadenylate-binding protein thereby inhibiting cellular translation.</text>
</comment>
<comment type="function">
    <molecule>RNA-directed RNA polymerase</molecule>
    <text evidence="8">Replicates genomic and antigenomic RNA by recognizing replications specific signals. Also transcribes a subgenomic mRNA by initiating RNA synthesis internally on antigenomic RNA. This sgRNA codes for structural proteins. Catalyzes the covalent attachment VPg with viral RNAs (By similarity).</text>
</comment>
<comment type="function">
    <molecule>Capsid protein VP60</molecule>
    <text evidence="1 8">Capsid protein VP60 self assembles to form an icosahedral capsid with a T=3 symmetry, about 35 nm in diameter, and consisting of 180 capsid proteins. A smaller form of capsid with a diameter of 23 nm might be capsid proteins assembled as icosahedron with T=1 symmetry. The capsid encapsulate VP2 proteins and genomic or subgenomic RNA. Attaches virion to target cells by binding histo-blood group antigens, inducing endocytosis of the viral particle (By similarity). Acidification of the endosome induces conformational change of capsid protein thereby injecting virus genomic RNA into host cytoplasm (By similarity).</text>
</comment>
<comment type="catalytic activity">
    <molecule>NTPase</molecule>
    <reaction evidence="6">
        <text>a ribonucleoside 5'-triphosphate + H2O = a ribonucleoside 5'-diphosphate + phosphate + H(+)</text>
        <dbReference type="Rhea" id="RHEA:23680"/>
        <dbReference type="ChEBI" id="CHEBI:15377"/>
        <dbReference type="ChEBI" id="CHEBI:15378"/>
        <dbReference type="ChEBI" id="CHEBI:43474"/>
        <dbReference type="ChEBI" id="CHEBI:57930"/>
        <dbReference type="ChEBI" id="CHEBI:61557"/>
        <dbReference type="EC" id="3.6.1.15"/>
    </reaction>
</comment>
<comment type="catalytic activity">
    <molecule>3C-like protease</molecule>
    <reaction evidence="11">
        <text>Endopeptidase with a preference for cleavage when the P1 position is occupied by Glu-|-Xaa and the P1' position is occupied by Gly-|-Yaa.</text>
        <dbReference type="EC" id="3.4.22.66"/>
    </reaction>
</comment>
<comment type="catalytic activity">
    <molecule>RNA-directed RNA polymerase</molecule>
    <reaction evidence="9">
        <text>RNA(n) + a ribonucleoside 5'-triphosphate = RNA(n+1) + diphosphate</text>
        <dbReference type="Rhea" id="RHEA:21248"/>
        <dbReference type="Rhea" id="RHEA-COMP:14527"/>
        <dbReference type="Rhea" id="RHEA-COMP:17342"/>
        <dbReference type="ChEBI" id="CHEBI:33019"/>
        <dbReference type="ChEBI" id="CHEBI:61557"/>
        <dbReference type="ChEBI" id="CHEBI:140395"/>
        <dbReference type="EC" id="2.7.7.48"/>
    </reaction>
</comment>
<comment type="cofactor">
    <molecule>RNA-directed RNA polymerase</molecule>
    <cofactor evidence="3">
        <name>Mn(2+)</name>
        <dbReference type="ChEBI" id="CHEBI:29035"/>
    </cofactor>
</comment>
<comment type="subunit">
    <molecule>NS2</molecule>
    <text evidence="4">Homodimer.</text>
</comment>
<comment type="subunit">
    <molecule>Capsid protein VP60</molecule>
    <text evidence="8">Homomultimer. Interacts with host type II histo-blood group structures antigens at the surface of target cells.</text>
</comment>
<comment type="subcellular location">
    <molecule>NS1</molecule>
    <subcellularLocation>
        <location evidence="4">Host cytoplasm</location>
    </subcellularLocation>
</comment>
<comment type="subcellular location">
    <molecule>NS2</molecule>
    <subcellularLocation>
        <location evidence="4">Host cytoplasm</location>
    </subcellularLocation>
    <subcellularLocation>
        <location>Host endoplasmic reticulum</location>
    </subcellularLocation>
</comment>
<comment type="subcellular location">
    <molecule>NS4</molecule>
    <subcellularLocation>
        <location evidence="4">Host cytoplasm</location>
    </subcellularLocation>
</comment>
<comment type="subcellular location">
    <molecule>Capsid protein VP60</molecule>
    <subcellularLocation>
        <location>Virion</location>
    </subcellularLocation>
    <subcellularLocation>
        <location evidence="13">Host cytoplasm</location>
    </subcellularLocation>
</comment>
<comment type="alternative products">
    <event type="alternative promoter"/>
    <isoform>
        <id>Q86117-1</id>
        <name>Genome polyprotein</name>
        <sequence type="displayed"/>
    </isoform>
    <isoform>
        <id>Q86117-2</id>
        <name>Subgenomic capsid protein VP60</name>
        <name>VP1</name>
        <sequence type="described" ref="VSP_034382"/>
    </isoform>
</comment>
<comment type="PTM">
    <molecule>Genome polyprotein</molecule>
    <text evidence="3">Specific enzymatic cleavages by its own cysteine protease yield mature proteins (By similarity). The protease cleaves itself from the nascent polyprotein autocatalytically. Precursor p41 can be cleaved by viral 3CLpro into protein p19 and VPg, or cleaved by host protease into protein p23/2 and protein p18 (By similarity).</text>
</comment>
<comment type="PTM">
    <molecule>Viral genome-linked protein</molecule>
    <text evidence="7">VPg is uridylylated by the polymerase and is covalently attached to the 5'-end of the polyadenylated genomic and subgenomic RNAs. This uridylylated form acts as a nucleotide-peptide primer for the polymerase.</text>
</comment>
<comment type="miscellaneous">
    <text evidence="1">Two different RNAs lead the expression of the capsid protein. One arises from the cleavage of the polyprotein translated from the genomic RNA and the other from the translation of a subgenomic RNA derived from the (-)RNA template. Capsid protein expressed from the subgenomic mRNA is produced in much larger amounts than the cleaved one (By similarity).</text>
</comment>
<comment type="miscellaneous">
    <molecule>Isoform Genome polyprotein</molecule>
    <text>Produced from the genomic RNA.</text>
</comment>
<comment type="miscellaneous">
    <molecule>Isoform Subgenomic capsid protein VP60</molecule>
    <text evidence="13">Produced from the subgenomic RNA.</text>
</comment>
<keyword id="KW-0877">Alternative promoter usage</keyword>
<keyword id="KW-0067">ATP-binding</keyword>
<keyword id="KW-0167">Capsid protein</keyword>
<keyword id="KW-0191">Covalent protein-RNA linkage</keyword>
<keyword id="KW-1015">Disulfide bond</keyword>
<keyword id="KW-0347">Helicase</keyword>
<keyword id="KW-1035">Host cytoplasm</keyword>
<keyword id="KW-1038">Host endoplasmic reticulum</keyword>
<keyword id="KW-0378">Hydrolase</keyword>
<keyword id="KW-0547">Nucleotide-binding</keyword>
<keyword id="KW-0548">Nucleotidyltransferase</keyword>
<keyword id="KW-0597">Phosphoprotein</keyword>
<keyword id="KW-0645">Protease</keyword>
<keyword id="KW-0696">RNA-directed RNA polymerase</keyword>
<keyword id="KW-0788">Thiol protease</keyword>
<keyword id="KW-0808">Transferase</keyword>
<keyword id="KW-0693">Viral RNA replication</keyword>
<keyword id="KW-0946">Virion</keyword>
<reference key="1">
    <citation type="journal article" date="1995" name="Virus Genes">
        <title>Sequence and genomic organization of a rabbit haemorrhagic disease virus isolate from a wild rabbit.</title>
        <authorList>
            <person name="Rasschaert D."/>
            <person name="Huguet S."/>
            <person name="Madelaine M.-F."/>
            <person name="Vautherot J.-F."/>
        </authorList>
    </citation>
    <scope>NUCLEOTIDE SEQUENCE [GENOMIC RNA]</scope>
</reference>
<accession>Q86117</accession>
<feature type="chain" id="PRO_0000342007" description="Genome polyprotein">
    <location>
        <begin position="1"/>
        <end position="2344"/>
    </location>
</feature>
<feature type="chain" id="PRO_0000036968" description="NS1">
    <location>
        <begin position="1"/>
        <end position="143"/>
    </location>
</feature>
<feature type="chain" id="PRO_0000036969" description="NS2">
    <location>
        <begin position="144"/>
        <end position="339"/>
    </location>
</feature>
<feature type="chain" id="PRO_0000036970" description="NTPase">
    <location>
        <begin position="340"/>
        <end position="718"/>
    </location>
</feature>
<feature type="chain" id="PRO_0000342008" description="Precursor p41">
    <location>
        <begin position="719"/>
        <end position="1108"/>
    </location>
</feature>
<feature type="chain" id="PRO_0000036971" description="NS4">
    <location>
        <begin position="719"/>
        <end position="993"/>
    </location>
</feature>
<feature type="chain" id="PRO_0000342009" description="Protein p23/2">
    <location>
        <begin position="719"/>
        <end position="936"/>
    </location>
</feature>
<feature type="chain" id="PRO_0000342010" description="Protein p18">
    <location>
        <begin position="937"/>
        <end position="1108"/>
    </location>
</feature>
<feature type="chain" id="PRO_0000036972" description="Viral genome-linked protein">
    <location>
        <begin position="994"/>
        <end position="1108"/>
    </location>
</feature>
<feature type="chain" id="PRO_0000036973" description="3C-like protease">
    <location>
        <begin position="1109"/>
        <end position="1251"/>
    </location>
</feature>
<feature type="chain" id="PRO_0000036974" description="RNA-directed RNA polymerase">
    <location>
        <begin position="1252"/>
        <end position="1767"/>
    </location>
</feature>
<feature type="chain" id="PRO_0000036976" description="Capsid protein VP60">
    <location>
        <begin position="1768"/>
        <end position="2344"/>
    </location>
</feature>
<feature type="domain" description="SF3 helicase" evidence="10">
    <location>
        <begin position="492"/>
        <end position="653"/>
    </location>
</feature>
<feature type="domain" description="Peptidase C24" evidence="11">
    <location>
        <begin position="1109"/>
        <end position="1244"/>
    </location>
</feature>
<feature type="domain" description="RdRp catalytic" evidence="9">
    <location>
        <begin position="1495"/>
        <end position="1619"/>
    </location>
</feature>
<feature type="region of interest" description="Disordered" evidence="12">
    <location>
        <begin position="1771"/>
        <end position="1796"/>
    </location>
</feature>
<feature type="compositionally biased region" description="Low complexity" evidence="12">
    <location>
        <begin position="1778"/>
        <end position="1794"/>
    </location>
</feature>
<feature type="active site" description="For 3CLpro activity" evidence="11">
    <location>
        <position position="1135"/>
    </location>
</feature>
<feature type="active site" description="For 3CLpro activity" evidence="11">
    <location>
        <position position="1152"/>
    </location>
</feature>
<feature type="active site" description="For 3CLpro activity" evidence="11">
    <location>
        <position position="1212"/>
    </location>
</feature>
<feature type="binding site" evidence="10">
    <location>
        <begin position="522"/>
        <end position="529"/>
    </location>
    <ligand>
        <name>ATP</name>
        <dbReference type="ChEBI" id="CHEBI:30616"/>
    </ligand>
</feature>
<feature type="site" description="Cleavage; by 3CLpro" evidence="3">
    <location>
        <begin position="143"/>
        <end position="144"/>
    </location>
</feature>
<feature type="site" description="Cleavage; by Pro-Pol" evidence="3">
    <location>
        <begin position="339"/>
        <end position="340"/>
    </location>
</feature>
<feature type="site" description="Cleavage; by 3CLpro" evidence="3">
    <location>
        <begin position="718"/>
        <end position="719"/>
    </location>
</feature>
<feature type="site" description="Cleavage; by host" evidence="3">
    <location>
        <begin position="936"/>
        <end position="937"/>
    </location>
</feature>
<feature type="site" description="Cleavage; by Pro-Pol" evidence="3">
    <location>
        <begin position="993"/>
        <end position="994"/>
    </location>
</feature>
<feature type="site" description="Cleavage; by 3CLpro" evidence="3">
    <location>
        <begin position="1108"/>
        <end position="1109"/>
    </location>
</feature>
<feature type="site" description="Cleavage; by Pro-Pol" evidence="3">
    <location>
        <begin position="1251"/>
        <end position="1252"/>
    </location>
</feature>
<feature type="site" description="Cleavage; by Pro-Pol" evidence="3">
    <location>
        <begin position="1767"/>
        <end position="1768"/>
    </location>
</feature>
<feature type="modified residue" description="O-(5'-phospho-RNA)-tyrosine" evidence="8">
    <location>
        <position position="1014"/>
    </location>
</feature>
<feature type="modified residue" description="O-UMP-tyrosine; transient" evidence="8">
    <location>
        <position position="1014"/>
    </location>
</feature>
<feature type="disulfide bond" evidence="1">
    <location>
        <begin position="1584"/>
        <end position="1591"/>
    </location>
</feature>
<feature type="splice variant" id="VSP_034382" description="In isoform Subgenomic capsid protein VP60." evidence="13">
    <location>
        <begin position="1"/>
        <end position="1765"/>
    </location>
</feature>